<gene>
    <name evidence="1" type="primary">ftsY</name>
    <name type="ordered locus">MSC_0489</name>
</gene>
<keyword id="KW-0002">3D-structure</keyword>
<keyword id="KW-1003">Cell membrane</keyword>
<keyword id="KW-0963">Cytoplasm</keyword>
<keyword id="KW-0342">GTP-binding</keyword>
<keyword id="KW-0378">Hydrolase</keyword>
<keyword id="KW-0472">Membrane</keyword>
<keyword id="KW-0547">Nucleotide-binding</keyword>
<keyword id="KW-0675">Receptor</keyword>
<keyword id="KW-1185">Reference proteome</keyword>
<reference key="1">
    <citation type="journal article" date="2004" name="Genome Res.">
        <title>The genome sequence of Mycoplasma mycoides subsp. mycoides SC type strain PG1T, the causative agent of contagious bovine pleuropneumonia (CBPP).</title>
        <authorList>
            <person name="Westberg J."/>
            <person name="Persson A."/>
            <person name="Holmberg A."/>
            <person name="Goesmann A."/>
            <person name="Lundeberg J."/>
            <person name="Johansson K.-E."/>
            <person name="Pettersson B."/>
            <person name="Uhlen M."/>
        </authorList>
    </citation>
    <scope>NUCLEOTIDE SEQUENCE [LARGE SCALE GENOMIC DNA]</scope>
    <source>
        <strain>CCUG 32753 / NCTC 10114 / PG1</strain>
    </source>
</reference>
<reference key="2">
    <citation type="journal article" date="2006" name="J. Struct. Biol.">
        <title>Conformational variability of the GTPase domain of the signal recognition particle receptor FtsY.</title>
        <authorList>
            <person name="Gariani T."/>
            <person name="Samuelsson T."/>
            <person name="Sauer-Eriksson A.E."/>
        </authorList>
    </citation>
    <scope>X-RAY CRYSTALLOGRAPHY (1.95 ANGSTROMS) OF 88-400</scope>
</reference>
<proteinExistence type="evidence at protein level"/>
<accession>Q6MTB9</accession>
<dbReference type="EC" id="3.6.5.4" evidence="1"/>
<dbReference type="EMBL" id="BX293980">
    <property type="protein sequence ID" value="CAE77117.1"/>
    <property type="molecule type" value="Genomic_DNA"/>
</dbReference>
<dbReference type="RefSeq" id="NP_975475.1">
    <property type="nucleotide sequence ID" value="NC_005364.2"/>
</dbReference>
<dbReference type="RefSeq" id="WP_011166673.1">
    <property type="nucleotide sequence ID" value="NC_005364.2"/>
</dbReference>
<dbReference type="PDB" id="1ZU4">
    <property type="method" value="X-ray"/>
    <property type="resolution" value="1.95 A"/>
    <property type="chains" value="A=88-400"/>
</dbReference>
<dbReference type="PDB" id="1ZU5">
    <property type="method" value="X-ray"/>
    <property type="resolution" value="2.40 A"/>
    <property type="chains" value="A/B=88-400"/>
</dbReference>
<dbReference type="PDBsum" id="1ZU4"/>
<dbReference type="PDBsum" id="1ZU5"/>
<dbReference type="SMR" id="Q6MTB9"/>
<dbReference type="STRING" id="272632.MSC_0489"/>
<dbReference type="KEGG" id="mmy:MSC_0489"/>
<dbReference type="PATRIC" id="fig|272632.4.peg.529"/>
<dbReference type="eggNOG" id="COG0552">
    <property type="taxonomic scope" value="Bacteria"/>
</dbReference>
<dbReference type="HOGENOM" id="CLU_009301_3_3_14"/>
<dbReference type="EvolutionaryTrace" id="Q6MTB9"/>
<dbReference type="Proteomes" id="UP000001016">
    <property type="component" value="Chromosome"/>
</dbReference>
<dbReference type="GO" id="GO:0005737">
    <property type="term" value="C:cytoplasm"/>
    <property type="evidence" value="ECO:0007669"/>
    <property type="project" value="UniProtKB-SubCell"/>
</dbReference>
<dbReference type="GO" id="GO:0005886">
    <property type="term" value="C:plasma membrane"/>
    <property type="evidence" value="ECO:0007669"/>
    <property type="project" value="UniProtKB-SubCell"/>
</dbReference>
<dbReference type="GO" id="GO:0016887">
    <property type="term" value="F:ATP hydrolysis activity"/>
    <property type="evidence" value="ECO:0007669"/>
    <property type="project" value="InterPro"/>
</dbReference>
<dbReference type="GO" id="GO:0005525">
    <property type="term" value="F:GTP binding"/>
    <property type="evidence" value="ECO:0007669"/>
    <property type="project" value="UniProtKB-UniRule"/>
</dbReference>
<dbReference type="GO" id="GO:0003924">
    <property type="term" value="F:GTPase activity"/>
    <property type="evidence" value="ECO:0007669"/>
    <property type="project" value="UniProtKB-UniRule"/>
</dbReference>
<dbReference type="GO" id="GO:0005047">
    <property type="term" value="F:signal recognition particle binding"/>
    <property type="evidence" value="ECO:0007669"/>
    <property type="project" value="TreeGrafter"/>
</dbReference>
<dbReference type="GO" id="GO:0006614">
    <property type="term" value="P:SRP-dependent cotranslational protein targeting to membrane"/>
    <property type="evidence" value="ECO:0007669"/>
    <property type="project" value="InterPro"/>
</dbReference>
<dbReference type="CDD" id="cd17874">
    <property type="entry name" value="FtsY"/>
    <property type="match status" value="1"/>
</dbReference>
<dbReference type="FunFam" id="3.40.50.300:FF:000053">
    <property type="entry name" value="Signal recognition particle receptor FtsY"/>
    <property type="match status" value="1"/>
</dbReference>
<dbReference type="Gene3D" id="3.40.50.300">
    <property type="entry name" value="P-loop containing nucleotide triphosphate hydrolases"/>
    <property type="match status" value="1"/>
</dbReference>
<dbReference type="Gene3D" id="1.20.120.140">
    <property type="entry name" value="Signal recognition particle SRP54, nucleotide-binding domain"/>
    <property type="match status" value="1"/>
</dbReference>
<dbReference type="HAMAP" id="MF_00920">
    <property type="entry name" value="FtsY"/>
    <property type="match status" value="1"/>
</dbReference>
<dbReference type="InterPro" id="IPR003593">
    <property type="entry name" value="AAA+_ATPase"/>
</dbReference>
<dbReference type="InterPro" id="IPR027417">
    <property type="entry name" value="P-loop_NTPase"/>
</dbReference>
<dbReference type="InterPro" id="IPR013822">
    <property type="entry name" value="Signal_recog_particl_SRP54_hlx"/>
</dbReference>
<dbReference type="InterPro" id="IPR004390">
    <property type="entry name" value="SR_rcpt_FtsY"/>
</dbReference>
<dbReference type="InterPro" id="IPR036225">
    <property type="entry name" value="SRP/SRP_N"/>
</dbReference>
<dbReference type="InterPro" id="IPR000897">
    <property type="entry name" value="SRP54_GTPase_dom"/>
</dbReference>
<dbReference type="InterPro" id="IPR042101">
    <property type="entry name" value="SRP54_N_sf"/>
</dbReference>
<dbReference type="NCBIfam" id="TIGR00064">
    <property type="entry name" value="ftsY"/>
    <property type="match status" value="1"/>
</dbReference>
<dbReference type="PANTHER" id="PTHR43134">
    <property type="entry name" value="SIGNAL RECOGNITION PARTICLE RECEPTOR SUBUNIT ALPHA"/>
    <property type="match status" value="1"/>
</dbReference>
<dbReference type="PANTHER" id="PTHR43134:SF1">
    <property type="entry name" value="SIGNAL RECOGNITION PARTICLE RECEPTOR SUBUNIT ALPHA"/>
    <property type="match status" value="1"/>
</dbReference>
<dbReference type="Pfam" id="PF00448">
    <property type="entry name" value="SRP54"/>
    <property type="match status" value="1"/>
</dbReference>
<dbReference type="Pfam" id="PF02881">
    <property type="entry name" value="SRP54_N"/>
    <property type="match status" value="1"/>
</dbReference>
<dbReference type="SMART" id="SM00382">
    <property type="entry name" value="AAA"/>
    <property type="match status" value="1"/>
</dbReference>
<dbReference type="SMART" id="SM00962">
    <property type="entry name" value="SRP54"/>
    <property type="match status" value="1"/>
</dbReference>
<dbReference type="SMART" id="SM00963">
    <property type="entry name" value="SRP54_N"/>
    <property type="match status" value="1"/>
</dbReference>
<dbReference type="SUPFAM" id="SSF47364">
    <property type="entry name" value="Domain of the SRP/SRP receptor G-proteins"/>
    <property type="match status" value="1"/>
</dbReference>
<dbReference type="SUPFAM" id="SSF52540">
    <property type="entry name" value="P-loop containing nucleoside triphosphate hydrolases"/>
    <property type="match status" value="1"/>
</dbReference>
<name>FTSY_MYCMS</name>
<comment type="function">
    <text evidence="1">Involved in targeting and insertion of nascent membrane proteins into the cytoplasmic membrane. Acts as a receptor for the complex formed by the signal recognition particle (SRP) and the ribosome-nascent chain (RNC).</text>
</comment>
<comment type="catalytic activity">
    <reaction evidence="1">
        <text>GTP + H2O = GDP + phosphate + H(+)</text>
        <dbReference type="Rhea" id="RHEA:19669"/>
        <dbReference type="ChEBI" id="CHEBI:15377"/>
        <dbReference type="ChEBI" id="CHEBI:15378"/>
        <dbReference type="ChEBI" id="CHEBI:37565"/>
        <dbReference type="ChEBI" id="CHEBI:43474"/>
        <dbReference type="ChEBI" id="CHEBI:58189"/>
        <dbReference type="EC" id="3.6.5.4"/>
    </reaction>
</comment>
<comment type="subunit">
    <text evidence="1">Part of the signal recognition particle protein translocation system, which is composed of SRP and FtsY.</text>
</comment>
<comment type="subcellular location">
    <subcellularLocation>
        <location>Cell membrane</location>
        <topology>Peripheral membrane protein</topology>
        <orientation>Cytoplasmic side</orientation>
    </subcellularLocation>
    <subcellularLocation>
        <location evidence="1">Cytoplasm</location>
    </subcellularLocation>
</comment>
<comment type="similarity">
    <text evidence="1">Belongs to the GTP-binding SRP family. FtsY subfamily.</text>
</comment>
<protein>
    <recommendedName>
        <fullName evidence="1">Signal recognition particle receptor FtsY</fullName>
        <shortName evidence="1">SRP receptor</shortName>
        <ecNumber evidence="1">3.6.5.4</ecNumber>
    </recommendedName>
</protein>
<evidence type="ECO:0000255" key="1">
    <source>
        <dbReference type="HAMAP-Rule" id="MF_00920"/>
    </source>
</evidence>
<evidence type="ECO:0000256" key="2">
    <source>
        <dbReference type="SAM" id="MobiDB-lite"/>
    </source>
</evidence>
<evidence type="ECO:0007829" key="3">
    <source>
        <dbReference type="PDB" id="1ZU4"/>
    </source>
</evidence>
<evidence type="ECO:0007829" key="4">
    <source>
        <dbReference type="PDB" id="1ZU5"/>
    </source>
</evidence>
<feature type="chain" id="PRO_0000416703" description="Signal recognition particle receptor FtsY">
    <location>
        <begin position="1"/>
        <end position="400"/>
    </location>
</feature>
<feature type="region of interest" description="Disordered" evidence="2">
    <location>
        <begin position="12"/>
        <end position="37"/>
    </location>
</feature>
<feature type="region of interest" description="Disordered" evidence="2">
    <location>
        <begin position="51"/>
        <end position="86"/>
    </location>
</feature>
<feature type="compositionally biased region" description="Basic and acidic residues" evidence="2">
    <location>
        <begin position="51"/>
        <end position="72"/>
    </location>
</feature>
<feature type="binding site" evidence="1">
    <location>
        <begin position="192"/>
        <end position="199"/>
    </location>
    <ligand>
        <name>GTP</name>
        <dbReference type="ChEBI" id="CHEBI:37565"/>
    </ligand>
</feature>
<feature type="binding site" evidence="1">
    <location>
        <begin position="278"/>
        <end position="282"/>
    </location>
    <ligand>
        <name>GTP</name>
        <dbReference type="ChEBI" id="CHEBI:37565"/>
    </ligand>
</feature>
<feature type="binding site" evidence="1">
    <location>
        <begin position="342"/>
        <end position="345"/>
    </location>
    <ligand>
        <name>GTP</name>
        <dbReference type="ChEBI" id="CHEBI:37565"/>
    </ligand>
</feature>
<feature type="helix" evidence="3">
    <location>
        <begin position="92"/>
        <end position="107"/>
    </location>
</feature>
<feature type="helix" evidence="3">
    <location>
        <begin position="114"/>
        <end position="126"/>
    </location>
</feature>
<feature type="helix" evidence="3">
    <location>
        <begin position="131"/>
        <end position="144"/>
    </location>
</feature>
<feature type="helix" evidence="3">
    <location>
        <begin position="151"/>
        <end position="167"/>
    </location>
</feature>
<feature type="helix" evidence="4">
    <location>
        <begin position="173"/>
        <end position="176"/>
    </location>
</feature>
<feature type="strand" evidence="3">
    <location>
        <begin position="186"/>
        <end position="193"/>
    </location>
</feature>
<feature type="helix" evidence="3">
    <location>
        <begin position="198"/>
        <end position="211"/>
    </location>
</feature>
<feature type="strand" evidence="3">
    <location>
        <begin position="216"/>
        <end position="220"/>
    </location>
</feature>
<feature type="helix" evidence="3">
    <location>
        <begin position="226"/>
        <end position="236"/>
    </location>
</feature>
<feature type="turn" evidence="3">
    <location>
        <begin position="237"/>
        <end position="239"/>
    </location>
</feature>
<feature type="strand" evidence="3">
    <location>
        <begin position="244"/>
        <end position="247"/>
    </location>
</feature>
<feature type="helix" evidence="3">
    <location>
        <begin position="256"/>
        <end position="269"/>
    </location>
</feature>
<feature type="strand" evidence="3">
    <location>
        <begin position="273"/>
        <end position="278"/>
    </location>
</feature>
<feature type="helix" evidence="3">
    <location>
        <begin position="283"/>
        <end position="285"/>
    </location>
</feature>
<feature type="helix" evidence="3">
    <location>
        <begin position="286"/>
        <end position="301"/>
    </location>
</feature>
<feature type="strand" evidence="3">
    <location>
        <begin position="309"/>
        <end position="316"/>
    </location>
</feature>
<feature type="helix" evidence="3">
    <location>
        <begin position="317"/>
        <end position="320"/>
    </location>
</feature>
<feature type="helix" evidence="3">
    <location>
        <begin position="321"/>
        <end position="330"/>
    </location>
</feature>
<feature type="turn" evidence="3">
    <location>
        <begin position="331"/>
        <end position="333"/>
    </location>
</feature>
<feature type="strand" evidence="3">
    <location>
        <begin position="338"/>
        <end position="342"/>
    </location>
</feature>
<feature type="helix" evidence="3">
    <location>
        <begin position="344"/>
        <end position="346"/>
    </location>
</feature>
<feature type="helix" evidence="3">
    <location>
        <begin position="352"/>
        <end position="360"/>
    </location>
</feature>
<feature type="strand" evidence="3">
    <location>
        <begin position="364"/>
        <end position="368"/>
    </location>
</feature>
<feature type="strand" evidence="3">
    <location>
        <begin position="370"/>
        <end position="372"/>
    </location>
</feature>
<feature type="strand" evidence="3">
    <location>
        <begin position="376"/>
        <end position="378"/>
    </location>
</feature>
<feature type="helix" evidence="3">
    <location>
        <begin position="381"/>
        <end position="388"/>
    </location>
</feature>
<feature type="helix" evidence="3">
    <location>
        <begin position="390"/>
        <end position="392"/>
    </location>
</feature>
<sequence length="400" mass="45730">MGFWAKLKEKLTKKTNQVEQDEPILDQQDQQDQQEEQEQIIEKEIEQIKENKIKKTKTSETKKQEKPIETLKEKKKREKQKEKDKKVEKAMLKSAFNFSKDIKKLSKKYKQADDEFFEELEDVLIQTDMGMKMVLKVSNLVRKKTKRDTSFENIKDALVESLYQAYTDNDWTNKKYRIDFKENRLNIFMLVGVNGTGKTTSLAKMANYYAELGYKVLIAAADTFRAGATQQLEEWIKTRLNNKVDLVKANKLNADPASVVFDAIKKAKEQNYDLLLIDTAGRLQNKVNLMAELEKMNKIIQQVEKSAPHEVLLVIDATTGQNGVIQAEEFSKVADVSGIILTKMDSTSKGGIGLAIKELLNIPIKMIGVGEKVDDLLAFDIDQYIVHLSSGFMQGDEVEK</sequence>
<organism>
    <name type="scientific">Mycoplasma mycoides subsp. mycoides SC (strain CCUG 32753 / NCTC 10114 / PG1)</name>
    <dbReference type="NCBI Taxonomy" id="272632"/>
    <lineage>
        <taxon>Bacteria</taxon>
        <taxon>Bacillati</taxon>
        <taxon>Mycoplasmatota</taxon>
        <taxon>Mollicutes</taxon>
        <taxon>Mycoplasmataceae</taxon>
        <taxon>Mycoplasma</taxon>
    </lineage>
</organism>